<name>CLPX_PECCP</name>
<organism>
    <name type="scientific">Pectobacterium carotovorum subsp. carotovorum (strain PC1)</name>
    <dbReference type="NCBI Taxonomy" id="561230"/>
    <lineage>
        <taxon>Bacteria</taxon>
        <taxon>Pseudomonadati</taxon>
        <taxon>Pseudomonadota</taxon>
        <taxon>Gammaproteobacteria</taxon>
        <taxon>Enterobacterales</taxon>
        <taxon>Pectobacteriaceae</taxon>
        <taxon>Pectobacterium</taxon>
    </lineage>
</organism>
<gene>
    <name evidence="1" type="primary">clpX</name>
    <name type="ordered locus">PC1_1049</name>
</gene>
<reference key="1">
    <citation type="submission" date="2009-07" db="EMBL/GenBank/DDBJ databases">
        <title>Complete sequence of Pectobacterium carotovorum subsp. carotovorum PC1.</title>
        <authorList>
            <consortium name="US DOE Joint Genome Institute"/>
            <person name="Lucas S."/>
            <person name="Copeland A."/>
            <person name="Lapidus A."/>
            <person name="Glavina del Rio T."/>
            <person name="Tice H."/>
            <person name="Bruce D."/>
            <person name="Goodwin L."/>
            <person name="Pitluck S."/>
            <person name="Munk A.C."/>
            <person name="Brettin T."/>
            <person name="Detter J.C."/>
            <person name="Han C."/>
            <person name="Tapia R."/>
            <person name="Larimer F."/>
            <person name="Land M."/>
            <person name="Hauser L."/>
            <person name="Kyrpides N."/>
            <person name="Mikhailova N."/>
            <person name="Balakrishnan V."/>
            <person name="Glasner J."/>
            <person name="Perna N.T."/>
        </authorList>
    </citation>
    <scope>NUCLEOTIDE SEQUENCE [LARGE SCALE GENOMIC DNA]</scope>
    <source>
        <strain>PC1</strain>
    </source>
</reference>
<sequence length="424" mass="46503">MTDKRKDGSGKLLYCSFCGKSQHEVRKLIAGPSVYICDECVDLCNDIIREEIKEVAPHRERSALPTPHEIRRHLDDYVIGQEQAKKVLAVAVYNHYKRLRNGDSSNGIELGKSNILLIGPTGSGKTLLAETLARFLDVPFTMADATTLTEAGYVGEDVENIIQKLLQKCDYDVQKAQRGIVYIDEIDKISRKSDNPSITRDVSGEGVQQALLKLIEGTIAAVPPQGGRKHPQQEFLQVDTSKILFICGGAFAGLDKVIEQRTDTGRGIGFNATVKGSADKATEGELLSNVEPGDLIKFGLIPEFIGRLPVVATLRELSEEALIQILREPKNALTKQYQALFNLEGVELEFRDEALTAIAKKAMARKTGARGLRSIVEAALLDTMYDLPSLESVDKVVIDESVIAGQSEPLLIYGKHETQQASGE</sequence>
<keyword id="KW-0067">ATP-binding</keyword>
<keyword id="KW-0143">Chaperone</keyword>
<keyword id="KW-0479">Metal-binding</keyword>
<keyword id="KW-0547">Nucleotide-binding</keyword>
<keyword id="KW-0862">Zinc</keyword>
<comment type="function">
    <text evidence="1">ATP-dependent specificity component of the Clp protease. It directs the protease to specific substrates. Can perform chaperone functions in the absence of ClpP.</text>
</comment>
<comment type="subunit">
    <text evidence="1">Component of the ClpX-ClpP complex. Forms a hexameric ring that, in the presence of ATP, binds to fourteen ClpP subunits assembled into a disk-like structure with a central cavity, resembling the structure of eukaryotic proteasomes.</text>
</comment>
<comment type="similarity">
    <text evidence="1">Belongs to the ClpX chaperone family.</text>
</comment>
<proteinExistence type="inferred from homology"/>
<accession>C6DB56</accession>
<dbReference type="EMBL" id="CP001657">
    <property type="protein sequence ID" value="ACT12098.1"/>
    <property type="molecule type" value="Genomic_DNA"/>
</dbReference>
<dbReference type="RefSeq" id="WP_015839347.1">
    <property type="nucleotide sequence ID" value="NC_012917.1"/>
</dbReference>
<dbReference type="SMR" id="C6DB56"/>
<dbReference type="STRING" id="561230.PC1_1049"/>
<dbReference type="GeneID" id="67795176"/>
<dbReference type="KEGG" id="pct:PC1_1049"/>
<dbReference type="eggNOG" id="COG1219">
    <property type="taxonomic scope" value="Bacteria"/>
</dbReference>
<dbReference type="HOGENOM" id="CLU_014218_8_2_6"/>
<dbReference type="OrthoDB" id="9804062at2"/>
<dbReference type="Proteomes" id="UP000002736">
    <property type="component" value="Chromosome"/>
</dbReference>
<dbReference type="GO" id="GO:0009376">
    <property type="term" value="C:HslUV protease complex"/>
    <property type="evidence" value="ECO:0007669"/>
    <property type="project" value="TreeGrafter"/>
</dbReference>
<dbReference type="GO" id="GO:0005524">
    <property type="term" value="F:ATP binding"/>
    <property type="evidence" value="ECO:0007669"/>
    <property type="project" value="UniProtKB-UniRule"/>
</dbReference>
<dbReference type="GO" id="GO:0016887">
    <property type="term" value="F:ATP hydrolysis activity"/>
    <property type="evidence" value="ECO:0007669"/>
    <property type="project" value="InterPro"/>
</dbReference>
<dbReference type="GO" id="GO:0140662">
    <property type="term" value="F:ATP-dependent protein folding chaperone"/>
    <property type="evidence" value="ECO:0007669"/>
    <property type="project" value="InterPro"/>
</dbReference>
<dbReference type="GO" id="GO:0046983">
    <property type="term" value="F:protein dimerization activity"/>
    <property type="evidence" value="ECO:0007669"/>
    <property type="project" value="InterPro"/>
</dbReference>
<dbReference type="GO" id="GO:0051082">
    <property type="term" value="F:unfolded protein binding"/>
    <property type="evidence" value="ECO:0007669"/>
    <property type="project" value="UniProtKB-UniRule"/>
</dbReference>
<dbReference type="GO" id="GO:0008270">
    <property type="term" value="F:zinc ion binding"/>
    <property type="evidence" value="ECO:0007669"/>
    <property type="project" value="InterPro"/>
</dbReference>
<dbReference type="GO" id="GO:0051301">
    <property type="term" value="P:cell division"/>
    <property type="evidence" value="ECO:0007669"/>
    <property type="project" value="TreeGrafter"/>
</dbReference>
<dbReference type="GO" id="GO:0051603">
    <property type="term" value="P:proteolysis involved in protein catabolic process"/>
    <property type="evidence" value="ECO:0007669"/>
    <property type="project" value="TreeGrafter"/>
</dbReference>
<dbReference type="CDD" id="cd19497">
    <property type="entry name" value="RecA-like_ClpX"/>
    <property type="match status" value="1"/>
</dbReference>
<dbReference type="FunFam" id="1.10.8.60:FF:000002">
    <property type="entry name" value="ATP-dependent Clp protease ATP-binding subunit ClpX"/>
    <property type="match status" value="1"/>
</dbReference>
<dbReference type="FunFam" id="3.40.50.300:FF:000005">
    <property type="entry name" value="ATP-dependent Clp protease ATP-binding subunit ClpX"/>
    <property type="match status" value="1"/>
</dbReference>
<dbReference type="Gene3D" id="1.10.8.60">
    <property type="match status" value="1"/>
</dbReference>
<dbReference type="Gene3D" id="6.20.220.10">
    <property type="entry name" value="ClpX chaperone, C4-type zinc finger domain"/>
    <property type="match status" value="1"/>
</dbReference>
<dbReference type="Gene3D" id="3.40.50.300">
    <property type="entry name" value="P-loop containing nucleotide triphosphate hydrolases"/>
    <property type="match status" value="1"/>
</dbReference>
<dbReference type="HAMAP" id="MF_00175">
    <property type="entry name" value="ClpX"/>
    <property type="match status" value="1"/>
</dbReference>
<dbReference type="InterPro" id="IPR003593">
    <property type="entry name" value="AAA+_ATPase"/>
</dbReference>
<dbReference type="InterPro" id="IPR050052">
    <property type="entry name" value="ATP-dep_Clp_protease_ClpX"/>
</dbReference>
<dbReference type="InterPro" id="IPR003959">
    <property type="entry name" value="ATPase_AAA_core"/>
</dbReference>
<dbReference type="InterPro" id="IPR019489">
    <property type="entry name" value="Clp_ATPase_C"/>
</dbReference>
<dbReference type="InterPro" id="IPR004487">
    <property type="entry name" value="Clp_protease_ATP-bd_su_ClpX"/>
</dbReference>
<dbReference type="InterPro" id="IPR046425">
    <property type="entry name" value="ClpX_bact"/>
</dbReference>
<dbReference type="InterPro" id="IPR027417">
    <property type="entry name" value="P-loop_NTPase"/>
</dbReference>
<dbReference type="InterPro" id="IPR010603">
    <property type="entry name" value="Znf_CppX_C4"/>
</dbReference>
<dbReference type="InterPro" id="IPR038366">
    <property type="entry name" value="Znf_CppX_C4_sf"/>
</dbReference>
<dbReference type="NCBIfam" id="TIGR00382">
    <property type="entry name" value="clpX"/>
    <property type="match status" value="1"/>
</dbReference>
<dbReference type="NCBIfam" id="NF003745">
    <property type="entry name" value="PRK05342.1"/>
    <property type="match status" value="1"/>
</dbReference>
<dbReference type="PANTHER" id="PTHR48102:SF7">
    <property type="entry name" value="ATP-DEPENDENT CLP PROTEASE ATP-BINDING SUBUNIT CLPX-LIKE, MITOCHONDRIAL"/>
    <property type="match status" value="1"/>
</dbReference>
<dbReference type="PANTHER" id="PTHR48102">
    <property type="entry name" value="ATP-DEPENDENT CLP PROTEASE ATP-BINDING SUBUNIT CLPX-LIKE, MITOCHONDRIAL-RELATED"/>
    <property type="match status" value="1"/>
</dbReference>
<dbReference type="Pfam" id="PF07724">
    <property type="entry name" value="AAA_2"/>
    <property type="match status" value="1"/>
</dbReference>
<dbReference type="Pfam" id="PF10431">
    <property type="entry name" value="ClpB_D2-small"/>
    <property type="match status" value="1"/>
</dbReference>
<dbReference type="Pfam" id="PF06689">
    <property type="entry name" value="zf-C4_ClpX"/>
    <property type="match status" value="1"/>
</dbReference>
<dbReference type="SMART" id="SM00382">
    <property type="entry name" value="AAA"/>
    <property type="match status" value="1"/>
</dbReference>
<dbReference type="SMART" id="SM01086">
    <property type="entry name" value="ClpB_D2-small"/>
    <property type="match status" value="1"/>
</dbReference>
<dbReference type="SMART" id="SM00994">
    <property type="entry name" value="zf-C4_ClpX"/>
    <property type="match status" value="1"/>
</dbReference>
<dbReference type="SUPFAM" id="SSF57716">
    <property type="entry name" value="Glucocorticoid receptor-like (DNA-binding domain)"/>
    <property type="match status" value="1"/>
</dbReference>
<dbReference type="SUPFAM" id="SSF52540">
    <property type="entry name" value="P-loop containing nucleoside triphosphate hydrolases"/>
    <property type="match status" value="1"/>
</dbReference>
<dbReference type="PROSITE" id="PS51902">
    <property type="entry name" value="CLPX_ZB"/>
    <property type="match status" value="1"/>
</dbReference>
<protein>
    <recommendedName>
        <fullName evidence="1">ATP-dependent Clp protease ATP-binding subunit ClpX</fullName>
    </recommendedName>
</protein>
<evidence type="ECO:0000255" key="1">
    <source>
        <dbReference type="HAMAP-Rule" id="MF_00175"/>
    </source>
</evidence>
<evidence type="ECO:0000255" key="2">
    <source>
        <dbReference type="PROSITE-ProRule" id="PRU01250"/>
    </source>
</evidence>
<feature type="chain" id="PRO_1000203738" description="ATP-dependent Clp protease ATP-binding subunit ClpX">
    <location>
        <begin position="1"/>
        <end position="424"/>
    </location>
</feature>
<feature type="domain" description="ClpX-type ZB" evidence="2">
    <location>
        <begin position="2"/>
        <end position="56"/>
    </location>
</feature>
<feature type="binding site" evidence="2">
    <location>
        <position position="15"/>
    </location>
    <ligand>
        <name>Zn(2+)</name>
        <dbReference type="ChEBI" id="CHEBI:29105"/>
    </ligand>
</feature>
<feature type="binding site" evidence="2">
    <location>
        <position position="18"/>
    </location>
    <ligand>
        <name>Zn(2+)</name>
        <dbReference type="ChEBI" id="CHEBI:29105"/>
    </ligand>
</feature>
<feature type="binding site" evidence="2">
    <location>
        <position position="37"/>
    </location>
    <ligand>
        <name>Zn(2+)</name>
        <dbReference type="ChEBI" id="CHEBI:29105"/>
    </ligand>
</feature>
<feature type="binding site" evidence="2">
    <location>
        <position position="40"/>
    </location>
    <ligand>
        <name>Zn(2+)</name>
        <dbReference type="ChEBI" id="CHEBI:29105"/>
    </ligand>
</feature>
<feature type="binding site" evidence="1">
    <location>
        <begin position="120"/>
        <end position="127"/>
    </location>
    <ligand>
        <name>ATP</name>
        <dbReference type="ChEBI" id="CHEBI:30616"/>
    </ligand>
</feature>